<proteinExistence type="evidence at protein level"/>
<accession>A1BPI0</accession>
<accession>F1LSS2</accession>
<reference key="1">
    <citation type="journal article" date="2006" name="J. Biol. Chem.">
        <title>Mammalian transcription in support of hybrid mRNA and protein synthesis in testis and lung.</title>
        <authorList>
            <person name="Fitzgerald C."/>
            <person name="Sikora C."/>
            <person name="Lawson V."/>
            <person name="Dong K."/>
            <person name="Cheng M."/>
            <person name="Oko R."/>
            <person name="van der Hoorn F.A."/>
        </authorList>
    </citation>
    <scope>NUCLEOTIDE SEQUENCE [MRNA] (ISOFORM 1)</scope>
    <scope>TISSUE SPECIFICITY</scope>
    <source>
        <strain>Sprague-Dawley</strain>
    </source>
</reference>
<reference key="2">
    <citation type="journal article" date="2004" name="Nature">
        <title>Genome sequence of the Brown Norway rat yields insights into mammalian evolution.</title>
        <authorList>
            <person name="Gibbs R.A."/>
            <person name="Weinstock G.M."/>
            <person name="Metzker M.L."/>
            <person name="Muzny D.M."/>
            <person name="Sodergren E.J."/>
            <person name="Scherer S."/>
            <person name="Scott G."/>
            <person name="Steffen D."/>
            <person name="Worley K.C."/>
            <person name="Burch P.E."/>
            <person name="Okwuonu G."/>
            <person name="Hines S."/>
            <person name="Lewis L."/>
            <person name="Deramo C."/>
            <person name="Delgado O."/>
            <person name="Dugan-Rocha S."/>
            <person name="Miner G."/>
            <person name="Morgan M."/>
            <person name="Hawes A."/>
            <person name="Gill R."/>
            <person name="Holt R.A."/>
            <person name="Adams M.D."/>
            <person name="Amanatides P.G."/>
            <person name="Baden-Tillson H."/>
            <person name="Barnstead M."/>
            <person name="Chin S."/>
            <person name="Evans C.A."/>
            <person name="Ferriera S."/>
            <person name="Fosler C."/>
            <person name="Glodek A."/>
            <person name="Gu Z."/>
            <person name="Jennings D."/>
            <person name="Kraft C.L."/>
            <person name="Nguyen T."/>
            <person name="Pfannkoch C.M."/>
            <person name="Sitter C."/>
            <person name="Sutton G.G."/>
            <person name="Venter J.C."/>
            <person name="Woodage T."/>
            <person name="Smith D."/>
            <person name="Lee H.-M."/>
            <person name="Gustafson E."/>
            <person name="Cahill P."/>
            <person name="Kana A."/>
            <person name="Doucette-Stamm L."/>
            <person name="Weinstock K."/>
            <person name="Fechtel K."/>
            <person name="Weiss R.B."/>
            <person name="Dunn D.M."/>
            <person name="Green E.D."/>
            <person name="Blakesley R.W."/>
            <person name="Bouffard G.G."/>
            <person name="De Jong P.J."/>
            <person name="Osoegawa K."/>
            <person name="Zhu B."/>
            <person name="Marra M."/>
            <person name="Schein J."/>
            <person name="Bosdet I."/>
            <person name="Fjell C."/>
            <person name="Jones S."/>
            <person name="Krzywinski M."/>
            <person name="Mathewson C."/>
            <person name="Siddiqui A."/>
            <person name="Wye N."/>
            <person name="McPherson J."/>
            <person name="Zhao S."/>
            <person name="Fraser C.M."/>
            <person name="Shetty J."/>
            <person name="Shatsman S."/>
            <person name="Geer K."/>
            <person name="Chen Y."/>
            <person name="Abramzon S."/>
            <person name="Nierman W.C."/>
            <person name="Havlak P.H."/>
            <person name="Chen R."/>
            <person name="Durbin K.J."/>
            <person name="Egan A."/>
            <person name="Ren Y."/>
            <person name="Song X.-Z."/>
            <person name="Li B."/>
            <person name="Liu Y."/>
            <person name="Qin X."/>
            <person name="Cawley S."/>
            <person name="Cooney A.J."/>
            <person name="D'Souza L.M."/>
            <person name="Martin K."/>
            <person name="Wu J.Q."/>
            <person name="Gonzalez-Garay M.L."/>
            <person name="Jackson A.R."/>
            <person name="Kalafus K.J."/>
            <person name="McLeod M.P."/>
            <person name="Milosavljevic A."/>
            <person name="Virk D."/>
            <person name="Volkov A."/>
            <person name="Wheeler D.A."/>
            <person name="Zhang Z."/>
            <person name="Bailey J.A."/>
            <person name="Eichler E.E."/>
            <person name="Tuzun E."/>
            <person name="Birney E."/>
            <person name="Mongin E."/>
            <person name="Ureta-Vidal A."/>
            <person name="Woodwark C."/>
            <person name="Zdobnov E."/>
            <person name="Bork P."/>
            <person name="Suyama M."/>
            <person name="Torrents D."/>
            <person name="Alexandersson M."/>
            <person name="Trask B.J."/>
            <person name="Young J.M."/>
            <person name="Huang H."/>
            <person name="Wang H."/>
            <person name="Xing H."/>
            <person name="Daniels S."/>
            <person name="Gietzen D."/>
            <person name="Schmidt J."/>
            <person name="Stevens K."/>
            <person name="Vitt U."/>
            <person name="Wingrove J."/>
            <person name="Camara F."/>
            <person name="Mar Alba M."/>
            <person name="Abril J.F."/>
            <person name="Guigo R."/>
            <person name="Smit A."/>
            <person name="Dubchak I."/>
            <person name="Rubin E.M."/>
            <person name="Couronne O."/>
            <person name="Poliakov A."/>
            <person name="Huebner N."/>
            <person name="Ganten D."/>
            <person name="Goesele C."/>
            <person name="Hummel O."/>
            <person name="Kreitler T."/>
            <person name="Lee Y.-A."/>
            <person name="Monti J."/>
            <person name="Schulz H."/>
            <person name="Zimdahl H."/>
            <person name="Himmelbauer H."/>
            <person name="Lehrach H."/>
            <person name="Jacob H.J."/>
            <person name="Bromberg S."/>
            <person name="Gullings-Handley J."/>
            <person name="Jensen-Seaman M.I."/>
            <person name="Kwitek A.E."/>
            <person name="Lazar J."/>
            <person name="Pasko D."/>
            <person name="Tonellato P.J."/>
            <person name="Twigger S."/>
            <person name="Ponting C.P."/>
            <person name="Duarte J.M."/>
            <person name="Rice S."/>
            <person name="Goodstadt L."/>
            <person name="Beatson S.A."/>
            <person name="Emes R.D."/>
            <person name="Winter E.E."/>
            <person name="Webber C."/>
            <person name="Brandt P."/>
            <person name="Nyakatura G."/>
            <person name="Adetobi M."/>
            <person name="Chiaromonte F."/>
            <person name="Elnitski L."/>
            <person name="Eswara P."/>
            <person name="Hardison R.C."/>
            <person name="Hou M."/>
            <person name="Kolbe D."/>
            <person name="Makova K."/>
            <person name="Miller W."/>
            <person name="Nekrutenko A."/>
            <person name="Riemer C."/>
            <person name="Schwartz S."/>
            <person name="Taylor J."/>
            <person name="Yang S."/>
            <person name="Zhang Y."/>
            <person name="Lindpaintner K."/>
            <person name="Andrews T.D."/>
            <person name="Caccamo M."/>
            <person name="Clamp M."/>
            <person name="Clarke L."/>
            <person name="Curwen V."/>
            <person name="Durbin R.M."/>
            <person name="Eyras E."/>
            <person name="Searle S.M."/>
            <person name="Cooper G.M."/>
            <person name="Batzoglou S."/>
            <person name="Brudno M."/>
            <person name="Sidow A."/>
            <person name="Stone E.A."/>
            <person name="Payseur B.A."/>
            <person name="Bourque G."/>
            <person name="Lopez-Otin C."/>
            <person name="Puente X.S."/>
            <person name="Chakrabarti K."/>
            <person name="Chatterji S."/>
            <person name="Dewey C."/>
            <person name="Pachter L."/>
            <person name="Bray N."/>
            <person name="Yap V.B."/>
            <person name="Caspi A."/>
            <person name="Tesler G."/>
            <person name="Pevzner P.A."/>
            <person name="Haussler D."/>
            <person name="Roskin K.M."/>
            <person name="Baertsch R."/>
            <person name="Clawson H."/>
            <person name="Furey T.S."/>
            <person name="Hinrichs A.S."/>
            <person name="Karolchik D."/>
            <person name="Kent W.J."/>
            <person name="Rosenbloom K.R."/>
            <person name="Trumbower H."/>
            <person name="Weirauch M."/>
            <person name="Cooper D.N."/>
            <person name="Stenson P.D."/>
            <person name="Ma B."/>
            <person name="Brent M."/>
            <person name="Arumugam M."/>
            <person name="Shteynberg D."/>
            <person name="Copley R.R."/>
            <person name="Taylor M.S."/>
            <person name="Riethman H."/>
            <person name="Mudunuri U."/>
            <person name="Peterson J."/>
            <person name="Guyer M."/>
            <person name="Felsenfeld A."/>
            <person name="Old S."/>
            <person name="Mockrin S."/>
            <person name="Collins F.S."/>
        </authorList>
    </citation>
    <scope>NUCLEOTIDE SEQUENCE [LARGE SCALE GENOMIC DNA]</scope>
    <source>
        <strain>Brown Norway</strain>
    </source>
</reference>
<reference key="3">
    <citation type="journal article" date="2011" name="J. Biol. Chem.">
        <title>Ornithine decarboxylase antizyme Oaz3 modulates protein phosphatase activity.</title>
        <authorList>
            <person name="Ruan Y."/>
            <person name="Cheng M."/>
            <person name="Ou Y."/>
            <person name="Oko R."/>
            <person name="van der Hoorn F.A."/>
        </authorList>
    </citation>
    <scope>ALTERNATIVE SPLICING (ISOFORM 2)</scope>
    <scope>FUNCTION (ISOFORM 2)</scope>
    <scope>SUBCELLULAR LOCATION</scope>
    <scope>IDENTIFICATION BY MASS SPECTROMETRY (ISOFORM 2)</scope>
    <scope>TISSUE SPECIFICITY</scope>
    <scope>INTERACTION WITH PPP1R16A</scope>
</reference>
<reference key="4">
    <citation type="journal article" date="2012" name="Nat. Commun.">
        <title>Quantitative maps of protein phosphorylation sites across 14 different rat organs and tissues.</title>
        <authorList>
            <person name="Lundby A."/>
            <person name="Secher A."/>
            <person name="Lage K."/>
            <person name="Nordsborg N.B."/>
            <person name="Dmytriyev A."/>
            <person name="Lundby C."/>
            <person name="Olsen J.V."/>
        </authorList>
    </citation>
    <scope>PHOSPHORYLATION [LARGE SCALE ANALYSIS] AT SER-6; SER-9 AND SER-12</scope>
    <scope>IDENTIFICATION BY MASS SPECTROMETRY [LARGE SCALE ANALYSIS]</scope>
</reference>
<sequence>MPCTRSRPSLYSLSYIKRGKTRNCLYPFWSPYAYYLYCYKYRITLREKMLPCCYRSITYKEQEDLTLRPHCCLPCSCLPYSCLPCSESLEGLQVGRSTAQEKDHSQLKELYSAGNLTVLSADPLLHQDPVQLDFHFRLTPHSSAHWHGLLCDHQLFLDIPFQALEQGNRESLTATLEYVEEKTNVDSVFVNFQSNHKDRGALLRAFSYMGFEVVRPDHPALPPWDNVIFMVYPLERDLGQPGQ</sequence>
<protein>
    <recommendedName>
        <fullName evidence="2">Ornithine decarboxylase antizyme 3</fullName>
        <shortName evidence="2">AZ3</shortName>
        <shortName>ODC-Az 3</shortName>
    </recommendedName>
</protein>
<comment type="function">
    <text evidence="2 3">Ornithine decarboxylase (ODC) antizyme protein that negatively regulates ODC activity and intracellular polyamine biosynthesis and uptake in response to increased intracellular polyamine levels. Binds to ODC monomers, inhibiting the assembly of the functional ODC homodimers. Does not target the ODC monomers for degradation, which allows a protein synthesis-independent restoration of ODC activity. Stabilizes AZIN2 by interfering with its ubiquitination. Involved in the translocation of AZNI2 from ER-Golgi intermediate compartment (ERGIC) to the cytosol. Probably plays a key role in spermatogenesis by regulating the intracellular concentration of polyamines in haploid germ cells (By similarity).</text>
</comment>
<comment type="function">
    <molecule>Isoform 2</molecule>
    <text evidence="5">Does not possess antizyme activity. Modulates PPP1CB activity through its interaction with PPP1R16A.</text>
</comment>
<comment type="subunit">
    <text evidence="1 2 3 5">Interacts with ODC1 and thereby sterically blocks ODC homodimerization (By similarity). Interacts with AZIN2; this interaction disrupts the interaction between the antizyme and ODC1 (By similarity). Interacts with GGN (By similarity). Isoform 2 interacts with PPP1R16A; Modulates PPP1CB activity (PubMed:21712390).</text>
</comment>
<comment type="subcellular location">
    <molecule>Isoform 1</molecule>
    <subcellularLocation>
        <location evidence="2">Nucleus</location>
    </subcellularLocation>
    <subcellularLocation>
        <location evidence="2">Cytoplasm</location>
    </subcellularLocation>
</comment>
<comment type="subcellular location">
    <molecule>Isoform 2</molecule>
    <subcellularLocation>
        <location evidence="5">Cell projection</location>
        <location evidence="5">Cilium</location>
        <location evidence="5">Flagellum</location>
    </subcellularLocation>
</comment>
<comment type="alternative products">
    <event type="alternative splicing"/>
    <event type="ribosomal frameshifting"/>
    <isoform>
        <id>A1BPI0-1</id>
        <name evidence="7">1</name>
        <sequence type="displayed"/>
    </isoform>
    <isoform>
        <id>A1BPI0-2</id>
        <name evidence="7">2</name>
        <name evidence="6">p12</name>
        <sequence type="described" ref="VSP_056786"/>
    </isoform>
</comment>
<comment type="tissue specificity">
    <text evidence="4 5">Testis-specific. Isoform 2 is expressed in outer dense fibers, fibrous sheath and the connecting piece of sperm (PubMed:21712390).</text>
</comment>
<comment type="miscellaneous">
    <text evidence="7">PubMed:17040916 reports an event of trans-splicing that creates a hybrid 14-kDa protein whose N-terminal 105 amino acids are encoded by the rat Oaz3 gene, located on chromosome 2 and its C-terminal 33 amino acids by a novel gene located on chromosome 4. The nuclear pre-mRNA of Oaz3 gene has 5 adenosine residues whereas the nuclear trans-spliced RNA has 6 adenosine residues suggesting that an unknown nuclear process adds 1 adenosine affecting the reading frame. Moreover the hybrid 14-kDa protein is the result of ribosomal frameshift. The hybrid 14-KDa protein is present in the outer dense fibers and the fibrous sheath and expressed in lung.</text>
</comment>
<comment type="miscellaneous">
    <molecule>Isoform 1</molecule>
    <text>Produced by ribosomal frameshifting occurring between the codons for Ser-86 and Glu-87. An autoregulatory mechanism enables modulation of frameshifting according to the cellular concentration of polyamines.</text>
</comment>
<comment type="miscellaneous">
    <molecule>Isoform 2</molecule>
    <text evidence="7">Produced by alternative splicing. This form is not the result of ribosomal frameshift.</text>
</comment>
<comment type="similarity">
    <text>Belongs to the ODC antizyme family.</text>
</comment>
<comment type="sequence caution" evidence="7">
    <conflict type="miscellaneous discrepancy">
        <sequence resource="EMBL-CDS" id="ABF59049"/>
    </conflict>
    <text>Unusual initiator. The initiator methionine is coded by a non-canonical CTG leucine codon.</text>
</comment>
<organism>
    <name type="scientific">Rattus norvegicus</name>
    <name type="common">Rat</name>
    <dbReference type="NCBI Taxonomy" id="10116"/>
    <lineage>
        <taxon>Eukaryota</taxon>
        <taxon>Metazoa</taxon>
        <taxon>Chordata</taxon>
        <taxon>Craniata</taxon>
        <taxon>Vertebrata</taxon>
        <taxon>Euteleostomi</taxon>
        <taxon>Mammalia</taxon>
        <taxon>Eutheria</taxon>
        <taxon>Euarchontoglires</taxon>
        <taxon>Glires</taxon>
        <taxon>Rodentia</taxon>
        <taxon>Myomorpha</taxon>
        <taxon>Muroidea</taxon>
        <taxon>Muridae</taxon>
        <taxon>Murinae</taxon>
        <taxon>Rattus</taxon>
    </lineage>
</organism>
<evidence type="ECO:0000250" key="1">
    <source>
        <dbReference type="UniProtKB" id="P54368"/>
    </source>
</evidence>
<evidence type="ECO:0000250" key="2">
    <source>
        <dbReference type="UniProtKB" id="Q9R109"/>
    </source>
</evidence>
<evidence type="ECO:0000250" key="3">
    <source>
        <dbReference type="UniProtKB" id="Q9UMX2"/>
    </source>
</evidence>
<evidence type="ECO:0000269" key="4">
    <source>
    </source>
</evidence>
<evidence type="ECO:0000269" key="5">
    <source>
    </source>
</evidence>
<evidence type="ECO:0000303" key="6">
    <source>
    </source>
</evidence>
<evidence type="ECO:0000305" key="7"/>
<evidence type="ECO:0000312" key="8">
    <source>
        <dbReference type="RGD" id="1599278"/>
    </source>
</evidence>
<evidence type="ECO:0007744" key="9">
    <source>
    </source>
</evidence>
<keyword id="KW-0025">Alternative splicing</keyword>
<keyword id="KW-0966">Cell projection</keyword>
<keyword id="KW-0969">Cilium</keyword>
<keyword id="KW-0963">Cytoplasm</keyword>
<keyword id="KW-0282">Flagellum</keyword>
<keyword id="KW-0539">Nucleus</keyword>
<keyword id="KW-0597">Phosphoprotein</keyword>
<keyword id="KW-1185">Reference proteome</keyword>
<keyword id="KW-0688">Ribosomal frameshifting</keyword>
<name>OAZ3_RAT</name>
<dbReference type="EMBL" id="DQ431008">
    <property type="protein sequence ID" value="ABF59049.1"/>
    <property type="status" value="ALT_SEQ"/>
    <property type="molecule type" value="mRNA"/>
</dbReference>
<dbReference type="EMBL" id="AABR06019264">
    <property type="status" value="NOT_ANNOTATED_CDS"/>
    <property type="molecule type" value="Genomic_DNA"/>
</dbReference>
<dbReference type="RefSeq" id="NP_001094488.1">
    <molecule id="A1BPI0-1"/>
    <property type="nucleotide sequence ID" value="NM_001101018.1"/>
</dbReference>
<dbReference type="SMR" id="A1BPI0"/>
<dbReference type="FunCoup" id="A1BPI0">
    <property type="interactions" value="290"/>
</dbReference>
<dbReference type="STRING" id="10116.ENSRNOP00000028303"/>
<dbReference type="iPTMnet" id="A1BPI0"/>
<dbReference type="PhosphoSitePlus" id="A1BPI0"/>
<dbReference type="PaxDb" id="10116-ENSRNOP00000028303"/>
<dbReference type="GeneID" id="689588"/>
<dbReference type="KEGG" id="rno:689588"/>
<dbReference type="UCSC" id="RGD:1599278">
    <property type="organism name" value="rat"/>
</dbReference>
<dbReference type="AGR" id="RGD:1599278"/>
<dbReference type="CTD" id="51686"/>
<dbReference type="RGD" id="1599278">
    <property type="gene designation" value="Oaz3"/>
</dbReference>
<dbReference type="eggNOG" id="KOG4387">
    <property type="taxonomic scope" value="Eukaryota"/>
</dbReference>
<dbReference type="InParanoid" id="A1BPI0"/>
<dbReference type="OrthoDB" id="11722at9989"/>
<dbReference type="PhylomeDB" id="A1BPI0"/>
<dbReference type="TreeFam" id="TF314741"/>
<dbReference type="Reactome" id="R-RNO-350562">
    <property type="pathway name" value="Regulation of ornithine decarboxylase (ODC)"/>
</dbReference>
<dbReference type="PRO" id="PR:A1BPI0"/>
<dbReference type="Proteomes" id="UP000002494">
    <property type="component" value="Unplaced"/>
</dbReference>
<dbReference type="GO" id="GO:0005737">
    <property type="term" value="C:cytoplasm"/>
    <property type="evidence" value="ECO:0000266"/>
    <property type="project" value="RGD"/>
</dbReference>
<dbReference type="GO" id="GO:0005654">
    <property type="term" value="C:nucleoplasm"/>
    <property type="evidence" value="ECO:0007669"/>
    <property type="project" value="Ensembl"/>
</dbReference>
<dbReference type="GO" id="GO:0005634">
    <property type="term" value="C:nucleus"/>
    <property type="evidence" value="ECO:0000266"/>
    <property type="project" value="RGD"/>
</dbReference>
<dbReference type="GO" id="GO:0036126">
    <property type="term" value="C:sperm flagellum"/>
    <property type="evidence" value="ECO:0000314"/>
    <property type="project" value="RGD"/>
</dbReference>
<dbReference type="GO" id="GO:0071532">
    <property type="term" value="F:ankyrin repeat binding"/>
    <property type="evidence" value="ECO:0000314"/>
    <property type="project" value="RGD"/>
</dbReference>
<dbReference type="GO" id="GO:0008073">
    <property type="term" value="F:ornithine decarboxylase inhibitor activity"/>
    <property type="evidence" value="ECO:0000266"/>
    <property type="project" value="RGD"/>
</dbReference>
<dbReference type="GO" id="GO:1902268">
    <property type="term" value="P:negative regulation of polyamine transmembrane transport"/>
    <property type="evidence" value="ECO:0000266"/>
    <property type="project" value="RGD"/>
</dbReference>
<dbReference type="GO" id="GO:0051497">
    <property type="term" value="P:negative regulation of stress fiber assembly"/>
    <property type="evidence" value="ECO:0000314"/>
    <property type="project" value="RGD"/>
</dbReference>
<dbReference type="GO" id="GO:0090316">
    <property type="term" value="P:positive regulation of intracellular protein transport"/>
    <property type="evidence" value="ECO:0000266"/>
    <property type="project" value="RGD"/>
</dbReference>
<dbReference type="GO" id="GO:0045732">
    <property type="term" value="P:positive regulation of protein catabolic process"/>
    <property type="evidence" value="ECO:0000266"/>
    <property type="project" value="RGD"/>
</dbReference>
<dbReference type="GO" id="GO:0075523">
    <property type="term" value="P:viral translational frameshifting"/>
    <property type="evidence" value="ECO:0007669"/>
    <property type="project" value="UniProtKB-KW"/>
</dbReference>
<dbReference type="FunFam" id="3.40.630.60:FF:000002">
    <property type="entry name" value="Ornithine decarboxylase antizyme 3"/>
    <property type="match status" value="1"/>
</dbReference>
<dbReference type="Gene3D" id="3.40.630.60">
    <property type="match status" value="1"/>
</dbReference>
<dbReference type="InterPro" id="IPR016181">
    <property type="entry name" value="Acyl_CoA_acyltransferase"/>
</dbReference>
<dbReference type="InterPro" id="IPR002993">
    <property type="entry name" value="ODC_AZ"/>
</dbReference>
<dbReference type="InterPro" id="IPR038581">
    <property type="entry name" value="ODC_AZ_sf"/>
</dbReference>
<dbReference type="PANTHER" id="PTHR10279">
    <property type="entry name" value="ORNITHINE DECARBOXYLASE ANTIZYME"/>
    <property type="match status" value="1"/>
</dbReference>
<dbReference type="PANTHER" id="PTHR10279:SF9">
    <property type="entry name" value="ORNITHINE DECARBOXYLASE ANTIZYME 3"/>
    <property type="match status" value="1"/>
</dbReference>
<dbReference type="Pfam" id="PF02100">
    <property type="entry name" value="ODC_AZ"/>
    <property type="match status" value="1"/>
</dbReference>
<dbReference type="SUPFAM" id="SSF55729">
    <property type="entry name" value="Acyl-CoA N-acyltransferases (Nat)"/>
    <property type="match status" value="1"/>
</dbReference>
<dbReference type="PROSITE" id="PS01337">
    <property type="entry name" value="ODC_AZ"/>
    <property type="match status" value="1"/>
</dbReference>
<gene>
    <name evidence="8" type="primary">Oaz3</name>
</gene>
<feature type="chain" id="PRO_0000430516" description="Ornithine decarboxylase antizyme 3">
    <location>
        <begin position="1"/>
        <end position="243"/>
    </location>
</feature>
<feature type="modified residue" description="Phosphoserine" evidence="9">
    <location>
        <position position="6"/>
    </location>
</feature>
<feature type="modified residue" description="Phosphoserine" evidence="9">
    <location>
        <position position="9"/>
    </location>
</feature>
<feature type="modified residue" description="Phosphoserine" evidence="9">
    <location>
        <position position="12"/>
    </location>
</feature>
<feature type="splice variant" id="VSP_056786" description="In isoform 2." evidence="5">
    <location>
        <begin position="87"/>
        <end position="243"/>
    </location>
</feature>